<protein>
    <recommendedName>
        <fullName evidence="1">Cytochrome c-type biogenesis protein CcmE</fullName>
    </recommendedName>
    <alternativeName>
        <fullName evidence="1">Cytochrome c maturation protein E</fullName>
    </alternativeName>
    <alternativeName>
        <fullName evidence="1">Heme chaperone CcmE</fullName>
    </alternativeName>
</protein>
<dbReference type="EMBL" id="CP001063">
    <property type="protein sequence ID" value="ACD09702.1"/>
    <property type="molecule type" value="Genomic_DNA"/>
</dbReference>
<dbReference type="RefSeq" id="WP_001026418.1">
    <property type="nucleotide sequence ID" value="NC_010658.1"/>
</dbReference>
<dbReference type="SMR" id="B2TV39"/>
<dbReference type="STRING" id="344609.SbBS512_E0744"/>
<dbReference type="GeneID" id="86860369"/>
<dbReference type="KEGG" id="sbc:SbBS512_E0744"/>
<dbReference type="HOGENOM" id="CLU_079503_1_0_6"/>
<dbReference type="Proteomes" id="UP000001030">
    <property type="component" value="Chromosome"/>
</dbReference>
<dbReference type="GO" id="GO:0005886">
    <property type="term" value="C:plasma membrane"/>
    <property type="evidence" value="ECO:0007669"/>
    <property type="project" value="UniProtKB-SubCell"/>
</dbReference>
<dbReference type="GO" id="GO:0020037">
    <property type="term" value="F:heme binding"/>
    <property type="evidence" value="ECO:0007669"/>
    <property type="project" value="InterPro"/>
</dbReference>
<dbReference type="GO" id="GO:0046872">
    <property type="term" value="F:metal ion binding"/>
    <property type="evidence" value="ECO:0007669"/>
    <property type="project" value="UniProtKB-KW"/>
</dbReference>
<dbReference type="GO" id="GO:0017004">
    <property type="term" value="P:cytochrome complex assembly"/>
    <property type="evidence" value="ECO:0007669"/>
    <property type="project" value="UniProtKB-KW"/>
</dbReference>
<dbReference type="FunFam" id="2.40.50.140:FF:000104">
    <property type="entry name" value="Cytochrome c-type biogenesis protein CcmE"/>
    <property type="match status" value="1"/>
</dbReference>
<dbReference type="Gene3D" id="2.40.50.140">
    <property type="entry name" value="Nucleic acid-binding proteins"/>
    <property type="match status" value="1"/>
</dbReference>
<dbReference type="HAMAP" id="MF_01959">
    <property type="entry name" value="CcmE"/>
    <property type="match status" value="1"/>
</dbReference>
<dbReference type="InterPro" id="IPR004329">
    <property type="entry name" value="CcmE"/>
</dbReference>
<dbReference type="InterPro" id="IPR036127">
    <property type="entry name" value="CcmE-like_sf"/>
</dbReference>
<dbReference type="InterPro" id="IPR012340">
    <property type="entry name" value="NA-bd_OB-fold"/>
</dbReference>
<dbReference type="NCBIfam" id="NF009635">
    <property type="entry name" value="PRK13150.1"/>
    <property type="match status" value="1"/>
</dbReference>
<dbReference type="NCBIfam" id="NF009638">
    <property type="entry name" value="PRK13165.1"/>
    <property type="match status" value="1"/>
</dbReference>
<dbReference type="NCBIfam" id="NF009727">
    <property type="entry name" value="PRK13254.1-1"/>
    <property type="match status" value="1"/>
</dbReference>
<dbReference type="NCBIfam" id="NF009729">
    <property type="entry name" value="PRK13254.1-3"/>
    <property type="match status" value="1"/>
</dbReference>
<dbReference type="PANTHER" id="PTHR34128">
    <property type="entry name" value="CYTOCHROME C-TYPE BIOGENESIS PROTEIN CCME HOMOLOG, MITOCHONDRIAL"/>
    <property type="match status" value="1"/>
</dbReference>
<dbReference type="PANTHER" id="PTHR34128:SF2">
    <property type="entry name" value="CYTOCHROME C-TYPE BIOGENESIS PROTEIN CCME HOMOLOG, MITOCHONDRIAL"/>
    <property type="match status" value="1"/>
</dbReference>
<dbReference type="Pfam" id="PF03100">
    <property type="entry name" value="CcmE"/>
    <property type="match status" value="1"/>
</dbReference>
<dbReference type="SUPFAM" id="SSF82093">
    <property type="entry name" value="Heme chaperone CcmE"/>
    <property type="match status" value="1"/>
</dbReference>
<reference key="1">
    <citation type="submission" date="2008-05" db="EMBL/GenBank/DDBJ databases">
        <title>Complete sequence of Shigella boydii serotype 18 strain BS512.</title>
        <authorList>
            <person name="Rasko D.A."/>
            <person name="Rosovitz M."/>
            <person name="Maurelli A.T."/>
            <person name="Myers G."/>
            <person name="Seshadri R."/>
            <person name="Cer R."/>
            <person name="Jiang L."/>
            <person name="Ravel J."/>
            <person name="Sebastian Y."/>
        </authorList>
    </citation>
    <scope>NUCLEOTIDE SEQUENCE [LARGE SCALE GENOMIC DNA]</scope>
    <source>
        <strain>CDC 3083-94 / BS512</strain>
    </source>
</reference>
<gene>
    <name evidence="1" type="primary">ccmE</name>
    <name evidence="1" type="synonym">cycJ</name>
    <name type="ordered locus">SbBS512_E0744</name>
</gene>
<accession>B2TV39</accession>
<comment type="function">
    <text evidence="1">Heme chaperone required for the biogenesis of c-type cytochromes. Transiently binds heme delivered by CcmC and transfers the heme to apo-cytochromes in a process facilitated by CcmF and CcmH.</text>
</comment>
<comment type="subcellular location">
    <subcellularLocation>
        <location evidence="1">Cell inner membrane</location>
        <topology evidence="1">Single-pass type II membrane protein</topology>
        <orientation evidence="1">Periplasmic side</orientation>
    </subcellularLocation>
</comment>
<comment type="similarity">
    <text evidence="1">Belongs to the CcmE/CycJ family.</text>
</comment>
<proteinExistence type="inferred from homology"/>
<sequence length="159" mass="17698">MNIRRKNRLWIACAVLAGLALTIGLVLYALRSNIDLFYTPGEILYGKRETQQMPEVGQRLRVGGMVMPGSVQRDPNSLKVTFTIYDAEGSVDVSYEGILPDLFREGQGVVVQGELEKGNHILAKEVLAKHDENYTPPEVEKAMEANHRRPASVYKDPAS</sequence>
<feature type="chain" id="PRO_1000189053" description="Cytochrome c-type biogenesis protein CcmE">
    <location>
        <begin position="1"/>
        <end position="159"/>
    </location>
</feature>
<feature type="topological domain" description="Cytoplasmic" evidence="1">
    <location>
        <begin position="1"/>
        <end position="8"/>
    </location>
</feature>
<feature type="transmembrane region" description="Helical; Signal-anchor for type II membrane protein" evidence="1">
    <location>
        <begin position="9"/>
        <end position="29"/>
    </location>
</feature>
<feature type="topological domain" description="Periplasmic" evidence="1">
    <location>
        <begin position="30"/>
        <end position="159"/>
    </location>
</feature>
<feature type="region of interest" description="Disordered" evidence="2">
    <location>
        <begin position="132"/>
        <end position="159"/>
    </location>
</feature>
<feature type="compositionally biased region" description="Basic and acidic residues" evidence="2">
    <location>
        <begin position="132"/>
        <end position="147"/>
    </location>
</feature>
<feature type="binding site" description="covalent" evidence="1">
    <location>
        <position position="130"/>
    </location>
    <ligand>
        <name>heme</name>
        <dbReference type="ChEBI" id="CHEBI:30413"/>
    </ligand>
</feature>
<feature type="binding site" description="axial binding residue" evidence="1">
    <location>
        <position position="134"/>
    </location>
    <ligand>
        <name>heme</name>
        <dbReference type="ChEBI" id="CHEBI:30413"/>
    </ligand>
    <ligandPart>
        <name>Fe</name>
        <dbReference type="ChEBI" id="CHEBI:18248"/>
    </ligandPart>
</feature>
<name>CCME_SHIB3</name>
<keyword id="KW-0997">Cell inner membrane</keyword>
<keyword id="KW-1003">Cell membrane</keyword>
<keyword id="KW-0201">Cytochrome c-type biogenesis</keyword>
<keyword id="KW-0349">Heme</keyword>
<keyword id="KW-0408">Iron</keyword>
<keyword id="KW-0472">Membrane</keyword>
<keyword id="KW-0479">Metal-binding</keyword>
<keyword id="KW-1185">Reference proteome</keyword>
<keyword id="KW-0735">Signal-anchor</keyword>
<keyword id="KW-0812">Transmembrane</keyword>
<keyword id="KW-1133">Transmembrane helix</keyword>
<evidence type="ECO:0000255" key="1">
    <source>
        <dbReference type="HAMAP-Rule" id="MF_01959"/>
    </source>
</evidence>
<evidence type="ECO:0000256" key="2">
    <source>
        <dbReference type="SAM" id="MobiDB-lite"/>
    </source>
</evidence>
<organism>
    <name type="scientific">Shigella boydii serotype 18 (strain CDC 3083-94 / BS512)</name>
    <dbReference type="NCBI Taxonomy" id="344609"/>
    <lineage>
        <taxon>Bacteria</taxon>
        <taxon>Pseudomonadati</taxon>
        <taxon>Pseudomonadota</taxon>
        <taxon>Gammaproteobacteria</taxon>
        <taxon>Enterobacterales</taxon>
        <taxon>Enterobacteriaceae</taxon>
        <taxon>Shigella</taxon>
    </lineage>
</organism>